<feature type="chain" id="PRO_1000009323" description="Leucine--tRNA ligase">
    <location>
        <begin position="1"/>
        <end position="819"/>
    </location>
</feature>
<feature type="short sequence motif" description="'HIGH' region">
    <location>
        <begin position="40"/>
        <end position="51"/>
    </location>
</feature>
<feature type="short sequence motif" description="'KMSKS' region">
    <location>
        <begin position="600"/>
        <end position="604"/>
    </location>
</feature>
<feature type="binding site" evidence="1">
    <location>
        <position position="603"/>
    </location>
    <ligand>
        <name>ATP</name>
        <dbReference type="ChEBI" id="CHEBI:30616"/>
    </ligand>
</feature>
<name>SYL_CHLTA</name>
<keyword id="KW-0030">Aminoacyl-tRNA synthetase</keyword>
<keyword id="KW-0067">ATP-binding</keyword>
<keyword id="KW-0963">Cytoplasm</keyword>
<keyword id="KW-0436">Ligase</keyword>
<keyword id="KW-0547">Nucleotide-binding</keyword>
<keyword id="KW-0648">Protein biosynthesis</keyword>
<accession>Q3KMF3</accession>
<reference key="1">
    <citation type="journal article" date="2005" name="Infect. Immun.">
        <title>Comparative genomic analysis of Chlamydia trachomatis oculotropic and genitotropic strains.</title>
        <authorList>
            <person name="Carlson J.H."/>
            <person name="Porcella S.F."/>
            <person name="McClarty G."/>
            <person name="Caldwell H.D."/>
        </authorList>
    </citation>
    <scope>NUCLEOTIDE SEQUENCE [LARGE SCALE GENOMIC DNA]</scope>
    <source>
        <strain>ATCC VR-571B / DSM 19440 / HAR-13</strain>
    </source>
</reference>
<comment type="catalytic activity">
    <reaction evidence="1">
        <text>tRNA(Leu) + L-leucine + ATP = L-leucyl-tRNA(Leu) + AMP + diphosphate</text>
        <dbReference type="Rhea" id="RHEA:11688"/>
        <dbReference type="Rhea" id="RHEA-COMP:9613"/>
        <dbReference type="Rhea" id="RHEA-COMP:9622"/>
        <dbReference type="ChEBI" id="CHEBI:30616"/>
        <dbReference type="ChEBI" id="CHEBI:33019"/>
        <dbReference type="ChEBI" id="CHEBI:57427"/>
        <dbReference type="ChEBI" id="CHEBI:78442"/>
        <dbReference type="ChEBI" id="CHEBI:78494"/>
        <dbReference type="ChEBI" id="CHEBI:456215"/>
        <dbReference type="EC" id="6.1.1.4"/>
    </reaction>
</comment>
<comment type="subcellular location">
    <subcellularLocation>
        <location evidence="1">Cytoplasm</location>
    </subcellularLocation>
</comment>
<comment type="similarity">
    <text evidence="1">Belongs to the class-I aminoacyl-tRNA synthetase family.</text>
</comment>
<organism>
    <name type="scientific">Chlamydia trachomatis serovar A (strain ATCC VR-571B / DSM 19440 / HAR-13)</name>
    <dbReference type="NCBI Taxonomy" id="315277"/>
    <lineage>
        <taxon>Bacteria</taxon>
        <taxon>Pseudomonadati</taxon>
        <taxon>Chlamydiota</taxon>
        <taxon>Chlamydiia</taxon>
        <taxon>Chlamydiales</taxon>
        <taxon>Chlamydiaceae</taxon>
        <taxon>Chlamydia/Chlamydophila group</taxon>
        <taxon>Chlamydia</taxon>
    </lineage>
</organism>
<gene>
    <name evidence="1" type="primary">leuS</name>
    <name type="ordered locus">CTA_0229</name>
</gene>
<proteinExistence type="inferred from homology"/>
<evidence type="ECO:0000255" key="1">
    <source>
        <dbReference type="HAMAP-Rule" id="MF_00049"/>
    </source>
</evidence>
<sequence length="819" mass="92890">MRYDPGLIEEKWQKFWKNEQVFKAEEDETKTKYYVLDMFPYPSGAGLHVGHLIGYTATDIVARYKRAQGFSVLHPMGWDSFGLPAEQYAIRTGTHPRETTEKNIANFKKQLTAMGFSYDESREFATSDPEYYKWTQKLFLILYEKGLAYMADMAVNYCPELGTVLSNEEIENGFSVDGGYPVERRMLRQWVLRITAFADQLLEGLDELDWPESVKQLQKNWIGKSSGASVNFATEHGAIEVFTTRPDTLIGVSFLALAPEHPLVDLLTSDEQKAVVAQYIKETQSKSERDRISEMKTKSGVFTGSYAKHPVTHELIPIWIADYVLIGFGSGAVMGVPAHDERDLLFAEQFNLPVVSVLNKEGVCINSCCEGFHLDGLSGEEAKQYVINFLEENHLGAAKIAYKLRDWLFSRQRYWGEPIPIIHFEDGSCRPLRDYELPLLPPEIQDYRPEGVGQGPLAKVREWVQVFDTETQRAGKRETHTMPQWAGSCWYYLRFCDAHNSAAPWAKEKEQYWMPVDLYIGGAEHAVLHLLYARFWHQIFYEAGIVSTPEPFKKLVNQGLVLATSYRIPGKGYIYPEIAKEENGKWVAPSGEELDVRQEKMSKSKLNGVDPQILIDEFGADAVRMYAMFSGPLDKNKLWSNQGVAGCRRFLNRFYEMVSSDRVKEDNNFEGLSLAHKLVQRVTDAIEKLSLNTIPSSFMEFINDFVKLAVYPKSAVEMAVRALAPIAPHISEELWVLLGNSPGVQKSGWPSVLPEYLEGQTVTIVVQVNGKLRARLDIMKDASKEEVLALARESASKYLEGCEVKEAIFVPARLVNFVV</sequence>
<protein>
    <recommendedName>
        <fullName evidence="1">Leucine--tRNA ligase</fullName>
        <ecNumber evidence="1">6.1.1.4</ecNumber>
    </recommendedName>
    <alternativeName>
        <fullName evidence="1">Leucyl-tRNA synthetase</fullName>
        <shortName evidence="1">LeuRS</shortName>
    </alternativeName>
</protein>
<dbReference type="EC" id="6.1.1.4" evidence="1"/>
<dbReference type="EMBL" id="CP000051">
    <property type="protein sequence ID" value="AAX50469.1"/>
    <property type="molecule type" value="Genomic_DNA"/>
</dbReference>
<dbReference type="RefSeq" id="WP_011324641.1">
    <property type="nucleotide sequence ID" value="NC_007429.1"/>
</dbReference>
<dbReference type="SMR" id="Q3KMF3"/>
<dbReference type="KEGG" id="cta:CTA_0229"/>
<dbReference type="HOGENOM" id="CLU_004427_0_0_0"/>
<dbReference type="Proteomes" id="UP000002532">
    <property type="component" value="Chromosome"/>
</dbReference>
<dbReference type="GO" id="GO:0005829">
    <property type="term" value="C:cytosol"/>
    <property type="evidence" value="ECO:0007669"/>
    <property type="project" value="TreeGrafter"/>
</dbReference>
<dbReference type="GO" id="GO:0002161">
    <property type="term" value="F:aminoacyl-tRNA deacylase activity"/>
    <property type="evidence" value="ECO:0007669"/>
    <property type="project" value="InterPro"/>
</dbReference>
<dbReference type="GO" id="GO:0005524">
    <property type="term" value="F:ATP binding"/>
    <property type="evidence" value="ECO:0007669"/>
    <property type="project" value="UniProtKB-UniRule"/>
</dbReference>
<dbReference type="GO" id="GO:0004823">
    <property type="term" value="F:leucine-tRNA ligase activity"/>
    <property type="evidence" value="ECO:0007669"/>
    <property type="project" value="UniProtKB-UniRule"/>
</dbReference>
<dbReference type="GO" id="GO:0006429">
    <property type="term" value="P:leucyl-tRNA aminoacylation"/>
    <property type="evidence" value="ECO:0007669"/>
    <property type="project" value="UniProtKB-UniRule"/>
</dbReference>
<dbReference type="CDD" id="cd07958">
    <property type="entry name" value="Anticodon_Ia_Leu_BEm"/>
    <property type="match status" value="1"/>
</dbReference>
<dbReference type="CDD" id="cd00812">
    <property type="entry name" value="LeuRS_core"/>
    <property type="match status" value="1"/>
</dbReference>
<dbReference type="FunFam" id="1.10.730.10:FF:000002">
    <property type="entry name" value="Leucine--tRNA ligase"/>
    <property type="match status" value="1"/>
</dbReference>
<dbReference type="FunFam" id="1.10.730.10:FF:000086">
    <property type="entry name" value="Leucine--tRNA ligase"/>
    <property type="match status" value="1"/>
</dbReference>
<dbReference type="FunFam" id="3.40.50.620:FF:000056">
    <property type="entry name" value="Leucine--tRNA ligase"/>
    <property type="match status" value="1"/>
</dbReference>
<dbReference type="FunFam" id="3.40.50.620:FF:000077">
    <property type="entry name" value="Leucine--tRNA ligase"/>
    <property type="match status" value="1"/>
</dbReference>
<dbReference type="Gene3D" id="3.40.50.620">
    <property type="entry name" value="HUPs"/>
    <property type="match status" value="2"/>
</dbReference>
<dbReference type="Gene3D" id="1.10.730.10">
    <property type="entry name" value="Isoleucyl-tRNA Synthetase, Domain 1"/>
    <property type="match status" value="1"/>
</dbReference>
<dbReference type="HAMAP" id="MF_00049_B">
    <property type="entry name" value="Leu_tRNA_synth_B"/>
    <property type="match status" value="1"/>
</dbReference>
<dbReference type="InterPro" id="IPR001412">
    <property type="entry name" value="aa-tRNA-synth_I_CS"/>
</dbReference>
<dbReference type="InterPro" id="IPR002302">
    <property type="entry name" value="Leu-tRNA-ligase"/>
</dbReference>
<dbReference type="InterPro" id="IPR025709">
    <property type="entry name" value="Leu_tRNA-synth_edit"/>
</dbReference>
<dbReference type="InterPro" id="IPR013155">
    <property type="entry name" value="M/V/L/I-tRNA-synth_anticd-bd"/>
</dbReference>
<dbReference type="InterPro" id="IPR015413">
    <property type="entry name" value="Methionyl/Leucyl_tRNA_Synth"/>
</dbReference>
<dbReference type="InterPro" id="IPR014729">
    <property type="entry name" value="Rossmann-like_a/b/a_fold"/>
</dbReference>
<dbReference type="InterPro" id="IPR009080">
    <property type="entry name" value="tRNAsynth_Ia_anticodon-bd"/>
</dbReference>
<dbReference type="InterPro" id="IPR009008">
    <property type="entry name" value="Val/Leu/Ile-tRNA-synth_edit"/>
</dbReference>
<dbReference type="NCBIfam" id="TIGR00396">
    <property type="entry name" value="leuS_bact"/>
    <property type="match status" value="1"/>
</dbReference>
<dbReference type="PANTHER" id="PTHR43740:SF2">
    <property type="entry name" value="LEUCINE--TRNA LIGASE, MITOCHONDRIAL"/>
    <property type="match status" value="1"/>
</dbReference>
<dbReference type="PANTHER" id="PTHR43740">
    <property type="entry name" value="LEUCYL-TRNA SYNTHETASE"/>
    <property type="match status" value="1"/>
</dbReference>
<dbReference type="Pfam" id="PF08264">
    <property type="entry name" value="Anticodon_1"/>
    <property type="match status" value="1"/>
</dbReference>
<dbReference type="Pfam" id="PF13603">
    <property type="entry name" value="tRNA-synt_1_2"/>
    <property type="match status" value="1"/>
</dbReference>
<dbReference type="Pfam" id="PF09334">
    <property type="entry name" value="tRNA-synt_1g"/>
    <property type="match status" value="1"/>
</dbReference>
<dbReference type="PRINTS" id="PR00985">
    <property type="entry name" value="TRNASYNTHLEU"/>
</dbReference>
<dbReference type="SUPFAM" id="SSF47323">
    <property type="entry name" value="Anticodon-binding domain of a subclass of class I aminoacyl-tRNA synthetases"/>
    <property type="match status" value="1"/>
</dbReference>
<dbReference type="SUPFAM" id="SSF52374">
    <property type="entry name" value="Nucleotidylyl transferase"/>
    <property type="match status" value="1"/>
</dbReference>
<dbReference type="SUPFAM" id="SSF50677">
    <property type="entry name" value="ValRS/IleRS/LeuRS editing domain"/>
    <property type="match status" value="1"/>
</dbReference>
<dbReference type="PROSITE" id="PS00178">
    <property type="entry name" value="AA_TRNA_LIGASE_I"/>
    <property type="match status" value="1"/>
</dbReference>